<evidence type="ECO:0000255" key="1">
    <source>
        <dbReference type="HAMAP-Rule" id="MF_00362"/>
    </source>
</evidence>
<evidence type="ECO:0000256" key="2">
    <source>
        <dbReference type="SAM" id="MobiDB-lite"/>
    </source>
</evidence>
<evidence type="ECO:0000305" key="3"/>
<name>RL10_CUTAK</name>
<comment type="function">
    <text evidence="1">Forms part of the ribosomal stalk, playing a central role in the interaction of the ribosome with GTP-bound translation factors.</text>
</comment>
<comment type="subunit">
    <text evidence="1">Part of the ribosomal stalk of the 50S ribosomal subunit. The N-terminus interacts with L11 and the large rRNA to form the base of the stalk. The C-terminus forms an elongated spine to which L12 dimers bind in a sequential fashion forming a multimeric L10(L12)X complex.</text>
</comment>
<comment type="similarity">
    <text evidence="1">Belongs to the universal ribosomal protein uL10 family.</text>
</comment>
<comment type="sequence caution" evidence="3">
    <conflict type="erroneous initiation">
        <sequence resource="EMBL-CDS" id="AAT83609"/>
    </conflict>
</comment>
<sequence>MARPDKVAAVAELKEKFSSAGATVLTEYRGLSVSALKDLRRSLGSDATYAVAKNTLTRIAAKEAGIEGLDDQLVGPTALAFINGDVASVAKGLKNFAKDNPLLVIKGGVMDGNVLDADQVKKLADLESREVLLAKLAGGLKANLTKAAVVFNALPSKAARGLGALQEKAAADPSVIGGAGEASDQEPKTTETPEASAAQDNTNE</sequence>
<feature type="chain" id="PRO_0000154685" description="Large ribosomal subunit protein uL10">
    <location>
        <begin position="1"/>
        <end position="204"/>
    </location>
</feature>
<feature type="region of interest" description="Disordered" evidence="2">
    <location>
        <begin position="170"/>
        <end position="204"/>
    </location>
</feature>
<feature type="compositionally biased region" description="Polar residues" evidence="2">
    <location>
        <begin position="192"/>
        <end position="204"/>
    </location>
</feature>
<keyword id="KW-0687">Ribonucleoprotein</keyword>
<keyword id="KW-0689">Ribosomal protein</keyword>
<keyword id="KW-0694">RNA-binding</keyword>
<keyword id="KW-0699">rRNA-binding</keyword>
<proteinExistence type="inferred from homology"/>
<protein>
    <recommendedName>
        <fullName evidence="1">Large ribosomal subunit protein uL10</fullName>
    </recommendedName>
    <alternativeName>
        <fullName evidence="3">50S ribosomal protein L10</fullName>
    </alternativeName>
</protein>
<accession>Q6A6K4</accession>
<dbReference type="EMBL" id="AE017283">
    <property type="protein sequence ID" value="AAT83609.1"/>
    <property type="status" value="ALT_INIT"/>
    <property type="molecule type" value="Genomic_DNA"/>
</dbReference>
<dbReference type="RefSeq" id="WP_002531301.1">
    <property type="nucleotide sequence ID" value="NZ_CP025935.1"/>
</dbReference>
<dbReference type="SMR" id="Q6A6K4"/>
<dbReference type="EnsemblBacteria" id="AAT83609">
    <property type="protein sequence ID" value="AAT83609"/>
    <property type="gene ID" value="PPA1887"/>
</dbReference>
<dbReference type="KEGG" id="pac:PPA1887"/>
<dbReference type="PATRIC" id="fig|267747.3.peg.1941"/>
<dbReference type="eggNOG" id="COG0244">
    <property type="taxonomic scope" value="Bacteria"/>
</dbReference>
<dbReference type="HOGENOM" id="CLU_092227_1_0_11"/>
<dbReference type="Proteomes" id="UP000000603">
    <property type="component" value="Chromosome"/>
</dbReference>
<dbReference type="GO" id="GO:0015934">
    <property type="term" value="C:large ribosomal subunit"/>
    <property type="evidence" value="ECO:0007669"/>
    <property type="project" value="InterPro"/>
</dbReference>
<dbReference type="GO" id="GO:0070180">
    <property type="term" value="F:large ribosomal subunit rRNA binding"/>
    <property type="evidence" value="ECO:0007669"/>
    <property type="project" value="UniProtKB-UniRule"/>
</dbReference>
<dbReference type="GO" id="GO:0003735">
    <property type="term" value="F:structural constituent of ribosome"/>
    <property type="evidence" value="ECO:0007669"/>
    <property type="project" value="InterPro"/>
</dbReference>
<dbReference type="GO" id="GO:0006412">
    <property type="term" value="P:translation"/>
    <property type="evidence" value="ECO:0007669"/>
    <property type="project" value="UniProtKB-UniRule"/>
</dbReference>
<dbReference type="CDD" id="cd05797">
    <property type="entry name" value="Ribosomal_L10"/>
    <property type="match status" value="1"/>
</dbReference>
<dbReference type="Gene3D" id="3.30.70.1730">
    <property type="match status" value="1"/>
</dbReference>
<dbReference type="Gene3D" id="6.10.250.290">
    <property type="match status" value="1"/>
</dbReference>
<dbReference type="HAMAP" id="MF_00362">
    <property type="entry name" value="Ribosomal_uL10"/>
    <property type="match status" value="1"/>
</dbReference>
<dbReference type="InterPro" id="IPR001790">
    <property type="entry name" value="Ribosomal_uL10"/>
</dbReference>
<dbReference type="InterPro" id="IPR043141">
    <property type="entry name" value="Ribosomal_uL10-like_sf"/>
</dbReference>
<dbReference type="InterPro" id="IPR022973">
    <property type="entry name" value="Ribosomal_uL10_bac"/>
</dbReference>
<dbReference type="InterPro" id="IPR047865">
    <property type="entry name" value="Ribosomal_uL10_bac_type"/>
</dbReference>
<dbReference type="InterPro" id="IPR002363">
    <property type="entry name" value="Ribosomal_uL10_CS_bac"/>
</dbReference>
<dbReference type="NCBIfam" id="NF000955">
    <property type="entry name" value="PRK00099.1-1"/>
    <property type="match status" value="1"/>
</dbReference>
<dbReference type="PANTHER" id="PTHR11560">
    <property type="entry name" value="39S RIBOSOMAL PROTEIN L10, MITOCHONDRIAL"/>
    <property type="match status" value="1"/>
</dbReference>
<dbReference type="Pfam" id="PF00466">
    <property type="entry name" value="Ribosomal_L10"/>
    <property type="match status" value="1"/>
</dbReference>
<dbReference type="SUPFAM" id="SSF160369">
    <property type="entry name" value="Ribosomal protein L10-like"/>
    <property type="match status" value="1"/>
</dbReference>
<dbReference type="PROSITE" id="PS01109">
    <property type="entry name" value="RIBOSOMAL_L10"/>
    <property type="match status" value="1"/>
</dbReference>
<reference key="1">
    <citation type="journal article" date="2004" name="Science">
        <title>The complete genome sequence of Propionibacterium acnes, a commensal of human skin.</title>
        <authorList>
            <person name="Brueggemann H."/>
            <person name="Henne A."/>
            <person name="Hoster F."/>
            <person name="Liesegang H."/>
            <person name="Wiezer A."/>
            <person name="Strittmatter A."/>
            <person name="Hujer S."/>
            <person name="Duerre P."/>
            <person name="Gottschalk G."/>
        </authorList>
    </citation>
    <scope>NUCLEOTIDE SEQUENCE [LARGE SCALE GENOMIC DNA]</scope>
    <source>
        <strain>DSM 16379 / KPA171202</strain>
    </source>
</reference>
<gene>
    <name evidence="1" type="primary">rplJ</name>
    <name type="ordered locus">PPA1887</name>
</gene>
<organism>
    <name type="scientific">Cutibacterium acnes (strain DSM 16379 / KPA171202)</name>
    <name type="common">Propionibacterium acnes</name>
    <dbReference type="NCBI Taxonomy" id="267747"/>
    <lineage>
        <taxon>Bacteria</taxon>
        <taxon>Bacillati</taxon>
        <taxon>Actinomycetota</taxon>
        <taxon>Actinomycetes</taxon>
        <taxon>Propionibacteriales</taxon>
        <taxon>Propionibacteriaceae</taxon>
        <taxon>Cutibacterium</taxon>
    </lineage>
</organism>